<comment type="function">
    <text evidence="1">Part of the Sec protein translocase complex. Interacts with the SecYEG preprotein conducting channel. Has a central role in coupling the hydrolysis of ATP to the transfer of proteins into and across the cell membrane, serving as an ATP-driven molecular motor driving the stepwise translocation of polypeptide chains across the membrane.</text>
</comment>
<comment type="catalytic activity">
    <reaction evidence="1">
        <text>ATP + H2O + cellular proteinSide 1 = ADP + phosphate + cellular proteinSide 2.</text>
        <dbReference type="EC" id="7.4.2.8"/>
    </reaction>
</comment>
<comment type="subunit">
    <text evidence="1">Monomer and homodimer. Part of the essential Sec protein translocation apparatus which comprises SecA, SecYEG and auxiliary proteins SecDF. Other proteins may also be involved.</text>
</comment>
<comment type="subcellular location">
    <subcellularLocation>
        <location evidence="1">Cell membrane</location>
        <topology evidence="1">Peripheral membrane protein</topology>
        <orientation evidence="1">Cytoplasmic side</orientation>
    </subcellularLocation>
    <subcellularLocation>
        <location evidence="1">Cytoplasm</location>
    </subcellularLocation>
    <text evidence="1">Distribution is 50-50.</text>
</comment>
<comment type="similarity">
    <text evidence="1">Belongs to the SecA family.</text>
</comment>
<proteinExistence type="inferred from homology"/>
<gene>
    <name evidence="1" type="primary">secA1</name>
    <name type="ordered locus">CE0774</name>
</gene>
<name>SECA1_COREF</name>
<keyword id="KW-0067">ATP-binding</keyword>
<keyword id="KW-1003">Cell membrane</keyword>
<keyword id="KW-0963">Cytoplasm</keyword>
<keyword id="KW-0472">Membrane</keyword>
<keyword id="KW-0547">Nucleotide-binding</keyword>
<keyword id="KW-0653">Protein transport</keyword>
<keyword id="KW-1185">Reference proteome</keyword>
<keyword id="KW-1278">Translocase</keyword>
<keyword id="KW-0811">Translocation</keyword>
<keyword id="KW-0813">Transport</keyword>
<organism>
    <name type="scientific">Corynebacterium efficiens (strain DSM 44549 / YS-314 / AJ 12310 / JCM 11189 / NBRC 100395)</name>
    <dbReference type="NCBI Taxonomy" id="196164"/>
    <lineage>
        <taxon>Bacteria</taxon>
        <taxon>Bacillati</taxon>
        <taxon>Actinomycetota</taxon>
        <taxon>Actinomycetes</taxon>
        <taxon>Mycobacteriales</taxon>
        <taxon>Corynebacteriaceae</taxon>
        <taxon>Corynebacterium</taxon>
    </lineage>
</organism>
<protein>
    <recommendedName>
        <fullName evidence="1">Protein translocase subunit SecA 1</fullName>
        <ecNumber evidence="1">7.4.2.8</ecNumber>
    </recommendedName>
</protein>
<sequence>MFGLSKMLRVGEGRAVKRLQKIADQVIALEDQYANLTDEELKAKTEEFKDRLAQGETLDDIFLDAFATAREASWRVLGQKHYKVQIMGGAALHFGNVAEMRTGEGKTLTCVLPAYLNALEGKGVHVVTVNDYLAKRDAEWMGRVHRWLGLSVGVILSELRPAERKVAYDCDITYGTNNELGFDYLRDNMARSLNDLVQRGHHYAIVDEVDSILIDEARTPLIISGPVDGSSQWYNVFAQIVPQLTRDIHYEVDHRKKTVGIKEEGVEKVEDLLGIENLYAPEHSQLVSYLNNAIKAEELFERDKDYIVRNGEVMIVDGFTGRVLAGRRYNEGMHQAIEAKEKVEIKNENQTLATVTLQNYFRLYEKLSGMTGTAETEAAELHQIYKLDVIQIPTNRENQRDDLTDLVYKTQEAKFAAVVDDIAERIANGQPVLVGTVSVERSEYLSQLLTRRGIKHNVLNAKHHEQEAQIVAQAGLPGAVTVATNMAGRGTDIVLGGNPDILLDIKLRERGLDPFEDEEAYQVAWEEELPKMKQRCEERAEKVREAGGLYVLGTERHESRRIDNQLRGRAGRQGDPGATRFYLSMRDDLMVRFVGPTMENMMNRLNVPDDVPIESKTVTNSIKGAQAQVENQNFEMRKNVLKYDEVMNEQRKVIYSERREILESSDISHYIKNMVDETISAYVAAATANGYVEDWDLDKLWNALEALYGPTFTWQSLVDGSEYGAPGELSAEDLRTALLEDARAEYAKLEEAVTALGGEAQMRNIERMVLMPVIDQKWREHLYEMDYLKEGIGLRAMAQRDPLVEYQKEGGDMFNAMKEAIKEETVRQLFLMRKQFVKQDEEANA</sequence>
<dbReference type="EC" id="7.4.2.8" evidence="1"/>
<dbReference type="EMBL" id="BA000035">
    <property type="protein sequence ID" value="BAC17584.1"/>
    <property type="molecule type" value="Genomic_DNA"/>
</dbReference>
<dbReference type="RefSeq" id="WP_011075138.1">
    <property type="nucleotide sequence ID" value="NC_004369.1"/>
</dbReference>
<dbReference type="SMR" id="Q8FRI7"/>
<dbReference type="STRING" id="196164.gene:10741176"/>
<dbReference type="KEGG" id="cef:CE0774"/>
<dbReference type="eggNOG" id="COG0653">
    <property type="taxonomic scope" value="Bacteria"/>
</dbReference>
<dbReference type="HOGENOM" id="CLU_005314_3_2_11"/>
<dbReference type="OrthoDB" id="9805579at2"/>
<dbReference type="Proteomes" id="UP000001409">
    <property type="component" value="Chromosome"/>
</dbReference>
<dbReference type="GO" id="GO:0031522">
    <property type="term" value="C:cell envelope Sec protein transport complex"/>
    <property type="evidence" value="ECO:0007669"/>
    <property type="project" value="TreeGrafter"/>
</dbReference>
<dbReference type="GO" id="GO:0005829">
    <property type="term" value="C:cytosol"/>
    <property type="evidence" value="ECO:0007669"/>
    <property type="project" value="TreeGrafter"/>
</dbReference>
<dbReference type="GO" id="GO:0005886">
    <property type="term" value="C:plasma membrane"/>
    <property type="evidence" value="ECO:0007669"/>
    <property type="project" value="UniProtKB-SubCell"/>
</dbReference>
<dbReference type="GO" id="GO:0005524">
    <property type="term" value="F:ATP binding"/>
    <property type="evidence" value="ECO:0007669"/>
    <property type="project" value="UniProtKB-UniRule"/>
</dbReference>
<dbReference type="GO" id="GO:0008564">
    <property type="term" value="F:protein-exporting ATPase activity"/>
    <property type="evidence" value="ECO:0007669"/>
    <property type="project" value="UniProtKB-EC"/>
</dbReference>
<dbReference type="GO" id="GO:0065002">
    <property type="term" value="P:intracellular protein transmembrane transport"/>
    <property type="evidence" value="ECO:0007669"/>
    <property type="project" value="UniProtKB-UniRule"/>
</dbReference>
<dbReference type="GO" id="GO:0017038">
    <property type="term" value="P:protein import"/>
    <property type="evidence" value="ECO:0007669"/>
    <property type="project" value="InterPro"/>
</dbReference>
<dbReference type="GO" id="GO:0006605">
    <property type="term" value="P:protein targeting"/>
    <property type="evidence" value="ECO:0007669"/>
    <property type="project" value="UniProtKB-UniRule"/>
</dbReference>
<dbReference type="GO" id="GO:0043952">
    <property type="term" value="P:protein transport by the Sec complex"/>
    <property type="evidence" value="ECO:0007669"/>
    <property type="project" value="TreeGrafter"/>
</dbReference>
<dbReference type="CDD" id="cd17928">
    <property type="entry name" value="DEXDc_SecA"/>
    <property type="match status" value="1"/>
</dbReference>
<dbReference type="CDD" id="cd18803">
    <property type="entry name" value="SF2_C_secA"/>
    <property type="match status" value="1"/>
</dbReference>
<dbReference type="FunFam" id="3.40.50.300:FF:000113">
    <property type="entry name" value="Preprotein translocase subunit SecA"/>
    <property type="match status" value="1"/>
</dbReference>
<dbReference type="FunFam" id="3.40.50.300:FF:000246">
    <property type="entry name" value="Preprotein translocase subunit SecA"/>
    <property type="match status" value="1"/>
</dbReference>
<dbReference type="FunFam" id="3.40.50.300:FF:000334">
    <property type="entry name" value="Protein translocase subunit SecA"/>
    <property type="match status" value="1"/>
</dbReference>
<dbReference type="FunFam" id="3.90.1440.10:FF:000002">
    <property type="entry name" value="Protein translocase subunit SecA"/>
    <property type="match status" value="1"/>
</dbReference>
<dbReference type="Gene3D" id="1.10.3060.10">
    <property type="entry name" value="Helical scaffold and wing domains of SecA"/>
    <property type="match status" value="1"/>
</dbReference>
<dbReference type="Gene3D" id="3.40.50.300">
    <property type="entry name" value="P-loop containing nucleotide triphosphate hydrolases"/>
    <property type="match status" value="2"/>
</dbReference>
<dbReference type="Gene3D" id="3.90.1440.10">
    <property type="entry name" value="SecA, preprotein cross-linking domain"/>
    <property type="match status" value="1"/>
</dbReference>
<dbReference type="HAMAP" id="MF_01382">
    <property type="entry name" value="SecA"/>
    <property type="match status" value="1"/>
</dbReference>
<dbReference type="InterPro" id="IPR014001">
    <property type="entry name" value="Helicase_ATP-bd"/>
</dbReference>
<dbReference type="InterPro" id="IPR001650">
    <property type="entry name" value="Helicase_C-like"/>
</dbReference>
<dbReference type="InterPro" id="IPR027417">
    <property type="entry name" value="P-loop_NTPase"/>
</dbReference>
<dbReference type="InterPro" id="IPR000185">
    <property type="entry name" value="SecA"/>
</dbReference>
<dbReference type="InterPro" id="IPR020937">
    <property type="entry name" value="SecA_CS"/>
</dbReference>
<dbReference type="InterPro" id="IPR011115">
    <property type="entry name" value="SecA_DEAD"/>
</dbReference>
<dbReference type="InterPro" id="IPR014018">
    <property type="entry name" value="SecA_motor_DEAD"/>
</dbReference>
<dbReference type="InterPro" id="IPR011130">
    <property type="entry name" value="SecA_preprotein_X-link_dom"/>
</dbReference>
<dbReference type="InterPro" id="IPR044722">
    <property type="entry name" value="SecA_SF2_C"/>
</dbReference>
<dbReference type="InterPro" id="IPR011116">
    <property type="entry name" value="SecA_Wing/Scaffold"/>
</dbReference>
<dbReference type="InterPro" id="IPR036266">
    <property type="entry name" value="SecA_Wing/Scaffold_sf"/>
</dbReference>
<dbReference type="InterPro" id="IPR036670">
    <property type="entry name" value="SecA_X-link_sf"/>
</dbReference>
<dbReference type="NCBIfam" id="NF009538">
    <property type="entry name" value="PRK12904.1"/>
    <property type="match status" value="1"/>
</dbReference>
<dbReference type="NCBIfam" id="TIGR00963">
    <property type="entry name" value="secA"/>
    <property type="match status" value="1"/>
</dbReference>
<dbReference type="PANTHER" id="PTHR30612:SF0">
    <property type="entry name" value="CHLOROPLAST PROTEIN-TRANSPORTING ATPASE"/>
    <property type="match status" value="1"/>
</dbReference>
<dbReference type="PANTHER" id="PTHR30612">
    <property type="entry name" value="SECA INNER MEMBRANE COMPONENT OF SEC PROTEIN SECRETION SYSTEM"/>
    <property type="match status" value="1"/>
</dbReference>
<dbReference type="Pfam" id="PF21090">
    <property type="entry name" value="P-loop_SecA"/>
    <property type="match status" value="1"/>
</dbReference>
<dbReference type="Pfam" id="PF07517">
    <property type="entry name" value="SecA_DEAD"/>
    <property type="match status" value="1"/>
</dbReference>
<dbReference type="Pfam" id="PF01043">
    <property type="entry name" value="SecA_PP_bind"/>
    <property type="match status" value="1"/>
</dbReference>
<dbReference type="Pfam" id="PF07516">
    <property type="entry name" value="SecA_SW"/>
    <property type="match status" value="1"/>
</dbReference>
<dbReference type="PRINTS" id="PR00906">
    <property type="entry name" value="SECA"/>
</dbReference>
<dbReference type="SMART" id="SM00957">
    <property type="entry name" value="SecA_DEAD"/>
    <property type="match status" value="1"/>
</dbReference>
<dbReference type="SMART" id="SM00958">
    <property type="entry name" value="SecA_PP_bind"/>
    <property type="match status" value="1"/>
</dbReference>
<dbReference type="SUPFAM" id="SSF81886">
    <property type="entry name" value="Helical scaffold and wing domains of SecA"/>
    <property type="match status" value="1"/>
</dbReference>
<dbReference type="SUPFAM" id="SSF52540">
    <property type="entry name" value="P-loop containing nucleoside triphosphate hydrolases"/>
    <property type="match status" value="2"/>
</dbReference>
<dbReference type="SUPFAM" id="SSF81767">
    <property type="entry name" value="Pre-protein crosslinking domain of SecA"/>
    <property type="match status" value="1"/>
</dbReference>
<dbReference type="PROSITE" id="PS01312">
    <property type="entry name" value="SECA"/>
    <property type="match status" value="1"/>
</dbReference>
<dbReference type="PROSITE" id="PS51196">
    <property type="entry name" value="SECA_MOTOR_DEAD"/>
    <property type="match status" value="1"/>
</dbReference>
<accession>Q8FRI7</accession>
<feature type="chain" id="PRO_0000318339" description="Protein translocase subunit SecA 1">
    <location>
        <begin position="1"/>
        <end position="845"/>
    </location>
</feature>
<feature type="binding site" evidence="1">
    <location>
        <position position="85"/>
    </location>
    <ligand>
        <name>ATP</name>
        <dbReference type="ChEBI" id="CHEBI:30616"/>
    </ligand>
</feature>
<feature type="binding site" evidence="1">
    <location>
        <begin position="103"/>
        <end position="107"/>
    </location>
    <ligand>
        <name>ATP</name>
        <dbReference type="ChEBI" id="CHEBI:30616"/>
    </ligand>
</feature>
<feature type="binding site" evidence="1">
    <location>
        <position position="492"/>
    </location>
    <ligand>
        <name>ATP</name>
        <dbReference type="ChEBI" id="CHEBI:30616"/>
    </ligand>
</feature>
<evidence type="ECO:0000255" key="1">
    <source>
        <dbReference type="HAMAP-Rule" id="MF_01382"/>
    </source>
</evidence>
<reference key="1">
    <citation type="journal article" date="2003" name="Genome Res.">
        <title>Comparative complete genome sequence analysis of the amino acid replacements responsible for the thermostability of Corynebacterium efficiens.</title>
        <authorList>
            <person name="Nishio Y."/>
            <person name="Nakamura Y."/>
            <person name="Kawarabayasi Y."/>
            <person name="Usuda Y."/>
            <person name="Kimura E."/>
            <person name="Sugimoto S."/>
            <person name="Matsui K."/>
            <person name="Yamagishi A."/>
            <person name="Kikuchi H."/>
            <person name="Ikeo K."/>
            <person name="Gojobori T."/>
        </authorList>
    </citation>
    <scope>NUCLEOTIDE SEQUENCE [LARGE SCALE GENOMIC DNA]</scope>
    <source>
        <strain>DSM 44549 / YS-314 / AJ 12310 / JCM 11189 / NBRC 100395</strain>
    </source>
</reference>